<protein>
    <recommendedName>
        <fullName evidence="1">Probable phosphoglycerate mutase GpmB</fullName>
        <ecNumber evidence="1">5.4.2.-</ecNumber>
    </recommendedName>
    <alternativeName>
        <fullName evidence="1">PGAM</fullName>
    </alternativeName>
    <alternativeName>
        <fullName evidence="1">Phosphoglyceromutase</fullName>
    </alternativeName>
</protein>
<reference key="1">
    <citation type="journal article" date="2011" name="J. Bacteriol.">
        <title>Comparative genomics of 28 Salmonella enterica isolates: evidence for CRISPR-mediated adaptive sublineage evolution.</title>
        <authorList>
            <person name="Fricke W.F."/>
            <person name="Mammel M.K."/>
            <person name="McDermott P.F."/>
            <person name="Tartera C."/>
            <person name="White D.G."/>
            <person name="Leclerc J.E."/>
            <person name="Ravel J."/>
            <person name="Cebula T.A."/>
        </authorList>
    </citation>
    <scope>NUCLEOTIDE SEQUENCE [LARGE SCALE GENOMIC DNA]</scope>
    <source>
        <strain>SL476</strain>
    </source>
</reference>
<comment type="catalytic activity">
    <reaction evidence="1">
        <text>(2R)-2-phosphoglycerate = (2R)-3-phosphoglycerate</text>
        <dbReference type="Rhea" id="RHEA:15901"/>
        <dbReference type="ChEBI" id="CHEBI:58272"/>
        <dbReference type="ChEBI" id="CHEBI:58289"/>
    </reaction>
</comment>
<comment type="pathway">
    <text evidence="1">Carbohydrate degradation; glycolysis; pyruvate from D-glyceraldehyde 3-phosphate: step 3/5.</text>
</comment>
<comment type="similarity">
    <text evidence="1">Belongs to the phosphoglycerate mutase family. GpmB subfamily.</text>
</comment>
<keyword id="KW-0324">Glycolysis</keyword>
<keyword id="KW-0413">Isomerase</keyword>
<feature type="chain" id="PRO_1000136015" description="Probable phosphoglycerate mutase GpmB">
    <location>
        <begin position="1"/>
        <end position="215"/>
    </location>
</feature>
<feature type="active site" description="Tele-phosphohistidine intermediate" evidence="1">
    <location>
        <position position="9"/>
    </location>
</feature>
<feature type="active site" description="Proton donor/acceptor" evidence="1">
    <location>
        <position position="82"/>
    </location>
</feature>
<feature type="binding site" evidence="1">
    <location>
        <begin position="8"/>
        <end position="15"/>
    </location>
    <ligand>
        <name>substrate</name>
    </ligand>
</feature>
<feature type="binding site" evidence="1">
    <location>
        <begin position="21"/>
        <end position="22"/>
    </location>
    <ligand>
        <name>substrate</name>
    </ligand>
</feature>
<feature type="binding site" evidence="1">
    <location>
        <position position="58"/>
    </location>
    <ligand>
        <name>substrate</name>
    </ligand>
</feature>
<feature type="binding site" evidence="1">
    <location>
        <position position="60"/>
    </location>
    <ligand>
        <name>substrate</name>
    </ligand>
</feature>
<feature type="binding site" evidence="1">
    <location>
        <begin position="82"/>
        <end position="85"/>
    </location>
    <ligand>
        <name>substrate</name>
    </ligand>
</feature>
<feature type="binding site" evidence="1">
    <location>
        <begin position="104"/>
        <end position="105"/>
    </location>
    <ligand>
        <name>substrate</name>
    </ligand>
</feature>
<feature type="binding site" evidence="1">
    <location>
        <begin position="151"/>
        <end position="152"/>
    </location>
    <ligand>
        <name>substrate</name>
    </ligand>
</feature>
<feature type="site" description="Transition state stabilizer" evidence="1">
    <location>
        <position position="150"/>
    </location>
</feature>
<name>GPMB_SALHS</name>
<organism>
    <name type="scientific">Salmonella heidelberg (strain SL476)</name>
    <dbReference type="NCBI Taxonomy" id="454169"/>
    <lineage>
        <taxon>Bacteria</taxon>
        <taxon>Pseudomonadati</taxon>
        <taxon>Pseudomonadota</taxon>
        <taxon>Gammaproteobacteria</taxon>
        <taxon>Enterobacterales</taxon>
        <taxon>Enterobacteriaceae</taxon>
        <taxon>Salmonella</taxon>
    </lineage>
</organism>
<evidence type="ECO:0000255" key="1">
    <source>
        <dbReference type="HAMAP-Rule" id="MF_01040"/>
    </source>
</evidence>
<accession>B4TH18</accession>
<sequence length="215" mass="23868">MLQVYLVRHGETQWNAERRIQGQSDSPLTAKGEQQAMQVGERARSLGITHIISSDLGRTKRTAEIIAQACGCDITFDSRLRELDMGVLEKRQIDSLTEEEEGWRRQLVNGTQDGRIPGGESMQELSDRVHAALASCLELPQGSRPLLVSHGIALGCLVSTILGLPAWAERRLRLRNCSISRIDYQESQWLASGWVVETAGDVSHLDAPALDELQR</sequence>
<gene>
    <name evidence="1" type="primary">gpmB</name>
    <name type="ordered locus">SeHA_C4995</name>
</gene>
<proteinExistence type="inferred from homology"/>
<dbReference type="EC" id="5.4.2.-" evidence="1"/>
<dbReference type="EMBL" id="CP001120">
    <property type="protein sequence ID" value="ACF68361.1"/>
    <property type="molecule type" value="Genomic_DNA"/>
</dbReference>
<dbReference type="RefSeq" id="WP_000942363.1">
    <property type="nucleotide sequence ID" value="NC_011083.1"/>
</dbReference>
<dbReference type="SMR" id="B4TH18"/>
<dbReference type="KEGG" id="seh:SeHA_C4995"/>
<dbReference type="HOGENOM" id="CLU_033323_9_5_6"/>
<dbReference type="UniPathway" id="UPA00109">
    <property type="reaction ID" value="UER00186"/>
</dbReference>
<dbReference type="Proteomes" id="UP000001866">
    <property type="component" value="Chromosome"/>
</dbReference>
<dbReference type="GO" id="GO:0005737">
    <property type="term" value="C:cytoplasm"/>
    <property type="evidence" value="ECO:0007669"/>
    <property type="project" value="TreeGrafter"/>
</dbReference>
<dbReference type="GO" id="GO:0016791">
    <property type="term" value="F:phosphatase activity"/>
    <property type="evidence" value="ECO:0007669"/>
    <property type="project" value="TreeGrafter"/>
</dbReference>
<dbReference type="GO" id="GO:0004619">
    <property type="term" value="F:phosphoglycerate mutase activity"/>
    <property type="evidence" value="ECO:0007669"/>
    <property type="project" value="UniProtKB-UniRule"/>
</dbReference>
<dbReference type="GO" id="GO:0006096">
    <property type="term" value="P:glycolytic process"/>
    <property type="evidence" value="ECO:0007669"/>
    <property type="project" value="UniProtKB-UniRule"/>
</dbReference>
<dbReference type="CDD" id="cd07067">
    <property type="entry name" value="HP_PGM_like"/>
    <property type="match status" value="1"/>
</dbReference>
<dbReference type="Gene3D" id="3.40.50.1240">
    <property type="entry name" value="Phosphoglycerate mutase-like"/>
    <property type="match status" value="1"/>
</dbReference>
<dbReference type="HAMAP" id="MF_01040">
    <property type="entry name" value="PGAM_GpmB"/>
    <property type="match status" value="1"/>
</dbReference>
<dbReference type="InterPro" id="IPR013078">
    <property type="entry name" value="His_Pase_superF_clade-1"/>
</dbReference>
<dbReference type="InterPro" id="IPR029033">
    <property type="entry name" value="His_PPase_superfam"/>
</dbReference>
<dbReference type="InterPro" id="IPR001345">
    <property type="entry name" value="PG/BPGM_mutase_AS"/>
</dbReference>
<dbReference type="InterPro" id="IPR050275">
    <property type="entry name" value="PGM_Phosphatase"/>
</dbReference>
<dbReference type="InterPro" id="IPR023086">
    <property type="entry name" value="Phosphoglycerate_mutase_GpmB"/>
</dbReference>
<dbReference type="NCBIfam" id="NF002901">
    <property type="entry name" value="PRK03482.1"/>
    <property type="match status" value="1"/>
</dbReference>
<dbReference type="PANTHER" id="PTHR48100">
    <property type="entry name" value="BROAD-SPECIFICITY PHOSPHATASE YOR283W-RELATED"/>
    <property type="match status" value="1"/>
</dbReference>
<dbReference type="PANTHER" id="PTHR48100:SF1">
    <property type="entry name" value="HISTIDINE PHOSPHATASE FAMILY PROTEIN-RELATED"/>
    <property type="match status" value="1"/>
</dbReference>
<dbReference type="Pfam" id="PF00300">
    <property type="entry name" value="His_Phos_1"/>
    <property type="match status" value="1"/>
</dbReference>
<dbReference type="SMART" id="SM00855">
    <property type="entry name" value="PGAM"/>
    <property type="match status" value="1"/>
</dbReference>
<dbReference type="SUPFAM" id="SSF53254">
    <property type="entry name" value="Phosphoglycerate mutase-like"/>
    <property type="match status" value="1"/>
</dbReference>
<dbReference type="PROSITE" id="PS00175">
    <property type="entry name" value="PG_MUTASE"/>
    <property type="match status" value="1"/>
</dbReference>